<name>IHFB_DICD3</name>
<sequence>MTKSELIERLAGQQSHIPAKVVEDAVKEMLEQMATTLASGDRIEIRGFGSFSLHYRAPRVGRNPKTGEKVELEGKYVPHFKPGKELRDRANIYG</sequence>
<keyword id="KW-0233">DNA recombination</keyword>
<keyword id="KW-0238">DNA-binding</keyword>
<keyword id="KW-1185">Reference proteome</keyword>
<keyword id="KW-0804">Transcription</keyword>
<keyword id="KW-0805">Transcription regulation</keyword>
<keyword id="KW-0810">Translation regulation</keyword>
<organism>
    <name type="scientific">Dickeya dadantii (strain 3937)</name>
    <name type="common">Erwinia chrysanthemi (strain 3937)</name>
    <dbReference type="NCBI Taxonomy" id="198628"/>
    <lineage>
        <taxon>Bacteria</taxon>
        <taxon>Pseudomonadati</taxon>
        <taxon>Pseudomonadota</taxon>
        <taxon>Gammaproteobacteria</taxon>
        <taxon>Enterobacterales</taxon>
        <taxon>Pectobacteriaceae</taxon>
        <taxon>Dickeya</taxon>
    </lineage>
</organism>
<gene>
    <name type="primary">ihfB</name>
    <name type="synonym">himD</name>
    <name type="ordered locus">Dda3937_04067</name>
</gene>
<proteinExistence type="inferred from homology"/>
<protein>
    <recommendedName>
        <fullName>Integration host factor subunit beta</fullName>
        <shortName>IHF-beta</shortName>
    </recommendedName>
</protein>
<feature type="chain" id="PRO_0000105051" description="Integration host factor subunit beta">
    <location>
        <begin position="1"/>
        <end position="94"/>
    </location>
</feature>
<accession>P37983</accession>
<accession>E0SMZ6</accession>
<evidence type="ECO:0000250" key="1"/>
<evidence type="ECO:0000305" key="2"/>
<dbReference type="EMBL" id="X74750">
    <property type="protein sequence ID" value="CAA52770.1"/>
    <property type="molecule type" value="Genomic_DNA"/>
</dbReference>
<dbReference type="EMBL" id="CP002038">
    <property type="protein sequence ID" value="ADM98266.1"/>
    <property type="molecule type" value="Genomic_DNA"/>
</dbReference>
<dbReference type="PIR" id="S37142">
    <property type="entry name" value="S37142"/>
</dbReference>
<dbReference type="RefSeq" id="WP_012884945.1">
    <property type="nucleotide sequence ID" value="NC_014500.1"/>
</dbReference>
<dbReference type="SMR" id="P37983"/>
<dbReference type="STRING" id="198628.Dda3937_04067"/>
<dbReference type="GeneID" id="55488882"/>
<dbReference type="KEGG" id="ddd:Dda3937_04067"/>
<dbReference type="eggNOG" id="COG0776">
    <property type="taxonomic scope" value="Bacteria"/>
</dbReference>
<dbReference type="HOGENOM" id="CLU_105066_2_0_6"/>
<dbReference type="OrthoDB" id="9804203at2"/>
<dbReference type="Proteomes" id="UP000006859">
    <property type="component" value="Chromosome"/>
</dbReference>
<dbReference type="GO" id="GO:0005694">
    <property type="term" value="C:chromosome"/>
    <property type="evidence" value="ECO:0007669"/>
    <property type="project" value="InterPro"/>
</dbReference>
<dbReference type="GO" id="GO:0005829">
    <property type="term" value="C:cytosol"/>
    <property type="evidence" value="ECO:0007669"/>
    <property type="project" value="TreeGrafter"/>
</dbReference>
<dbReference type="GO" id="GO:0003677">
    <property type="term" value="F:DNA binding"/>
    <property type="evidence" value="ECO:0007669"/>
    <property type="project" value="UniProtKB-UniRule"/>
</dbReference>
<dbReference type="GO" id="GO:0030527">
    <property type="term" value="F:structural constituent of chromatin"/>
    <property type="evidence" value="ECO:0007669"/>
    <property type="project" value="InterPro"/>
</dbReference>
<dbReference type="GO" id="GO:0006310">
    <property type="term" value="P:DNA recombination"/>
    <property type="evidence" value="ECO:0007669"/>
    <property type="project" value="UniProtKB-UniRule"/>
</dbReference>
<dbReference type="GO" id="GO:0006355">
    <property type="term" value="P:regulation of DNA-templated transcription"/>
    <property type="evidence" value="ECO:0007669"/>
    <property type="project" value="UniProtKB-UniRule"/>
</dbReference>
<dbReference type="GO" id="GO:0006417">
    <property type="term" value="P:regulation of translation"/>
    <property type="evidence" value="ECO:0007669"/>
    <property type="project" value="UniProtKB-UniRule"/>
</dbReference>
<dbReference type="CDD" id="cd13836">
    <property type="entry name" value="IHF_B"/>
    <property type="match status" value="1"/>
</dbReference>
<dbReference type="FunFam" id="4.10.520.10:FF:000003">
    <property type="entry name" value="Integration host factor subunit beta"/>
    <property type="match status" value="1"/>
</dbReference>
<dbReference type="Gene3D" id="4.10.520.10">
    <property type="entry name" value="IHF-like DNA-binding proteins"/>
    <property type="match status" value="1"/>
</dbReference>
<dbReference type="HAMAP" id="MF_00381">
    <property type="entry name" value="IHF_beta"/>
    <property type="match status" value="1"/>
</dbReference>
<dbReference type="InterPro" id="IPR000119">
    <property type="entry name" value="Hist_DNA-bd"/>
</dbReference>
<dbReference type="InterPro" id="IPR020816">
    <property type="entry name" value="Histone-like_DNA-bd_CS"/>
</dbReference>
<dbReference type="InterPro" id="IPR010992">
    <property type="entry name" value="IHF-like_DNA-bd_dom_sf"/>
</dbReference>
<dbReference type="InterPro" id="IPR005685">
    <property type="entry name" value="IHF_beta"/>
</dbReference>
<dbReference type="NCBIfam" id="TIGR00988">
    <property type="entry name" value="hip"/>
    <property type="match status" value="1"/>
</dbReference>
<dbReference type="NCBIfam" id="NF001222">
    <property type="entry name" value="PRK00199.1"/>
    <property type="match status" value="1"/>
</dbReference>
<dbReference type="PANTHER" id="PTHR33175">
    <property type="entry name" value="DNA-BINDING PROTEIN HU"/>
    <property type="match status" value="1"/>
</dbReference>
<dbReference type="PANTHER" id="PTHR33175:SF5">
    <property type="entry name" value="INTEGRATION HOST FACTOR SUBUNIT BETA"/>
    <property type="match status" value="1"/>
</dbReference>
<dbReference type="Pfam" id="PF00216">
    <property type="entry name" value="Bac_DNA_binding"/>
    <property type="match status" value="1"/>
</dbReference>
<dbReference type="PRINTS" id="PR01727">
    <property type="entry name" value="DNABINDINGHU"/>
</dbReference>
<dbReference type="SMART" id="SM00411">
    <property type="entry name" value="BHL"/>
    <property type="match status" value="1"/>
</dbReference>
<dbReference type="SUPFAM" id="SSF47729">
    <property type="entry name" value="IHF-like DNA-binding proteins"/>
    <property type="match status" value="1"/>
</dbReference>
<dbReference type="PROSITE" id="PS00045">
    <property type="entry name" value="HISTONE_LIKE"/>
    <property type="match status" value="1"/>
</dbReference>
<comment type="function">
    <text evidence="1">This protein is one of the two subunits of integration host factor, a specific DNA-binding protein that functions in genetic recombination as well as in transcriptional and translational control.</text>
</comment>
<comment type="subunit">
    <text evidence="1">Heterodimer of an alpha and a beta chain.</text>
</comment>
<comment type="similarity">
    <text evidence="2">Belongs to the bacterial histone-like protein family.</text>
</comment>
<reference key="1">
    <citation type="journal article" date="1994" name="Biochimie">
        <title>Identification of the integration host factor genes of Erwinia chrysanthemi 3937.</title>
        <authorList>
            <person name="Douillie A."/>
            <person name="Toussaint A."/>
            <person name="Faelen M."/>
        </authorList>
    </citation>
    <scope>NUCLEOTIDE SEQUENCE [GENOMIC DNA]</scope>
    <source>
        <strain>3937</strain>
    </source>
</reference>
<reference key="2">
    <citation type="journal article" date="2011" name="J. Bacteriol.">
        <title>Genome sequence of the plant-pathogenic bacterium Dickeya dadantii 3937.</title>
        <authorList>
            <person name="Glasner J.D."/>
            <person name="Yang C.H."/>
            <person name="Reverchon S."/>
            <person name="Hugouvieux-Cotte-Pattat N."/>
            <person name="Condemine G."/>
            <person name="Bohin J.P."/>
            <person name="Van Gijsegem F."/>
            <person name="Yang S."/>
            <person name="Franza T."/>
            <person name="Expert D."/>
            <person name="Plunkett G. III"/>
            <person name="San Francisco M.J."/>
            <person name="Charkowski A.O."/>
            <person name="Py B."/>
            <person name="Bell K."/>
            <person name="Rauscher L."/>
            <person name="Rodriguez-Palenzuela P."/>
            <person name="Toussaint A."/>
            <person name="Holeva M.C."/>
            <person name="He S.Y."/>
            <person name="Douet V."/>
            <person name="Boccara M."/>
            <person name="Blanco C."/>
            <person name="Toth I."/>
            <person name="Anderson B.D."/>
            <person name="Biehl B.S."/>
            <person name="Mau B."/>
            <person name="Flynn S.M."/>
            <person name="Barras F."/>
            <person name="Lindeberg M."/>
            <person name="Birch P.R."/>
            <person name="Tsuyumu S."/>
            <person name="Shi X."/>
            <person name="Hibbing M."/>
            <person name="Yap M.N."/>
            <person name="Carpentier M."/>
            <person name="Dassa E."/>
            <person name="Umehara M."/>
            <person name="Kim J.F."/>
            <person name="Rusch M."/>
            <person name="Soni P."/>
            <person name="Mayhew G.F."/>
            <person name="Fouts D.E."/>
            <person name="Gill S.R."/>
            <person name="Blattner F.R."/>
            <person name="Keen N.T."/>
            <person name="Perna N.T."/>
        </authorList>
    </citation>
    <scope>NUCLEOTIDE SEQUENCE [LARGE SCALE GENOMIC DNA]</scope>
    <source>
        <strain>3937</strain>
    </source>
</reference>